<sequence length="430" mass="47656">MAARLLRGSLRVLGGHRAPRQLPAARCSHSGGEERLETPSAKKLTDIGIRRIFSPEHDIFRKSVRKFFQEEVIPHHSEWEKAGEVSREVWEKAGKQGLLGVNIAEHLGGIGGDLYSAAIVWEEQAYSNCSGPGFSIHSGIVMSYITNHGSEEQIKHFIPQMTAGKCIGAIAMTEPGAGSDLQGIKTNAKKDGSDWILNGSKVFISNGSLSDVVIVVAVTNHEAPSPAHGISLFLVENGMKGFIKGRKLHKMGLKAQDTAELFFEDIRLPASALLGEENKGFYYIMKELPQERLLIADVAISASEFMFEETRNYVKQRKAFGKTVAHLQTVQHKLAELKTHICVTRAFVDNCLQLHEAKRLDSATACMAKYWASELQNSVAYDCVQLHGGWGYMWEYPIAKAYVDARVQPIYGGTNEIMKELIAREIVFDK</sequence>
<dbReference type="EC" id="1.3.8.8" evidence="5 6 7"/>
<dbReference type="EMBL" id="M74096">
    <property type="protein sequence ID" value="AAA51565.1"/>
    <property type="molecule type" value="mRNA"/>
</dbReference>
<dbReference type="EMBL" id="AK313498">
    <property type="protein sequence ID" value="BAG36280.1"/>
    <property type="molecule type" value="mRNA"/>
</dbReference>
<dbReference type="EMBL" id="AC006994">
    <property type="protein sequence ID" value="AAY14881.1"/>
    <property type="molecule type" value="Genomic_DNA"/>
</dbReference>
<dbReference type="EMBL" id="CH471063">
    <property type="protein sequence ID" value="EAW70481.1"/>
    <property type="molecule type" value="Genomic_DNA"/>
</dbReference>
<dbReference type="EMBL" id="BC039063">
    <property type="protein sequence ID" value="AAH39063.1"/>
    <property type="molecule type" value="mRNA"/>
</dbReference>
<dbReference type="EMBL" id="BC064549">
    <property type="protein sequence ID" value="AAH64549.1"/>
    <property type="molecule type" value="mRNA"/>
</dbReference>
<dbReference type="CCDS" id="CCDS2389.1"/>
<dbReference type="PIR" id="A40559">
    <property type="entry name" value="A40559"/>
</dbReference>
<dbReference type="RefSeq" id="NP_001599.1">
    <property type="nucleotide sequence ID" value="NM_001608.4"/>
</dbReference>
<dbReference type="PDB" id="8W0T">
    <property type="method" value="X-ray"/>
    <property type="resolution" value="2.50 A"/>
    <property type="chains" value="A/B/C/D=31-430"/>
</dbReference>
<dbReference type="PDB" id="8W0U">
    <property type="method" value="X-ray"/>
    <property type="resolution" value="2.80 A"/>
    <property type="chains" value="A/B/C/D=31-430"/>
</dbReference>
<dbReference type="PDB" id="8W0Z">
    <property type="method" value="X-ray"/>
    <property type="resolution" value="2.00 A"/>
    <property type="chains" value="A/B/C/D/E/F/G/H=31-430"/>
</dbReference>
<dbReference type="PDBsum" id="8W0T"/>
<dbReference type="PDBsum" id="8W0U"/>
<dbReference type="PDBsum" id="8W0Z"/>
<dbReference type="SMR" id="P28330"/>
<dbReference type="BioGRID" id="106551">
    <property type="interactions" value="17"/>
</dbReference>
<dbReference type="FunCoup" id="P28330">
    <property type="interactions" value="361"/>
</dbReference>
<dbReference type="IntAct" id="P28330">
    <property type="interactions" value="16"/>
</dbReference>
<dbReference type="STRING" id="9606.ENSP00000233710"/>
<dbReference type="SwissLipids" id="SLP:000001327"/>
<dbReference type="iPTMnet" id="P28330"/>
<dbReference type="PhosphoSitePlus" id="P28330"/>
<dbReference type="SwissPalm" id="P28330"/>
<dbReference type="BioMuta" id="ACADL"/>
<dbReference type="DMDM" id="223590148"/>
<dbReference type="jPOST" id="P28330"/>
<dbReference type="MassIVE" id="P28330"/>
<dbReference type="PaxDb" id="9606-ENSP00000233710"/>
<dbReference type="PeptideAtlas" id="P28330"/>
<dbReference type="ProteomicsDB" id="54469"/>
<dbReference type="Pumba" id="P28330"/>
<dbReference type="Antibodypedia" id="1641">
    <property type="antibodies" value="313 antibodies from 33 providers"/>
</dbReference>
<dbReference type="DNASU" id="33"/>
<dbReference type="Ensembl" id="ENST00000233710.4">
    <property type="protein sequence ID" value="ENSP00000233710.3"/>
    <property type="gene ID" value="ENSG00000115361.8"/>
</dbReference>
<dbReference type="GeneID" id="33"/>
<dbReference type="KEGG" id="hsa:33"/>
<dbReference type="MANE-Select" id="ENST00000233710.4">
    <property type="protein sequence ID" value="ENSP00000233710.3"/>
    <property type="RefSeq nucleotide sequence ID" value="NM_001608.4"/>
    <property type="RefSeq protein sequence ID" value="NP_001599.1"/>
</dbReference>
<dbReference type="UCSC" id="uc002vdz.5">
    <property type="organism name" value="human"/>
</dbReference>
<dbReference type="AGR" id="HGNC:88"/>
<dbReference type="CTD" id="33"/>
<dbReference type="DisGeNET" id="33"/>
<dbReference type="GeneCards" id="ACADL"/>
<dbReference type="HGNC" id="HGNC:88">
    <property type="gene designation" value="ACADL"/>
</dbReference>
<dbReference type="HPA" id="ENSG00000115361">
    <property type="expression patterns" value="Tissue enhanced (liver, pancreas)"/>
</dbReference>
<dbReference type="MalaCards" id="ACADL"/>
<dbReference type="MIM" id="609576">
    <property type="type" value="gene"/>
</dbReference>
<dbReference type="neXtProt" id="NX_P28330"/>
<dbReference type="OpenTargets" id="ENSG00000115361"/>
<dbReference type="PharmGKB" id="PA24424"/>
<dbReference type="VEuPathDB" id="HostDB:ENSG00000115361"/>
<dbReference type="eggNOG" id="KOG0141">
    <property type="taxonomic scope" value="Eukaryota"/>
</dbReference>
<dbReference type="GeneTree" id="ENSGT00940000157652"/>
<dbReference type="HOGENOM" id="CLU_018204_0_3_1"/>
<dbReference type="InParanoid" id="P28330"/>
<dbReference type="OMA" id="MWEYPVA"/>
<dbReference type="OrthoDB" id="9988775at2759"/>
<dbReference type="PAN-GO" id="P28330">
    <property type="GO annotations" value="8 GO annotations based on evolutionary models"/>
</dbReference>
<dbReference type="PhylomeDB" id="P28330"/>
<dbReference type="TreeFam" id="TF105054"/>
<dbReference type="BioCyc" id="MetaCyc:HS03876-MONOMER"/>
<dbReference type="PathwayCommons" id="P28330"/>
<dbReference type="Reactome" id="R-HSA-77285">
    <property type="pathway name" value="Beta oxidation of myristoyl-CoA to lauroyl-CoA"/>
</dbReference>
<dbReference type="Reactome" id="R-HSA-77288">
    <property type="pathway name" value="mitochondrial fatty acid beta-oxidation of unsaturated fatty acids"/>
</dbReference>
<dbReference type="Reactome" id="R-HSA-77310">
    <property type="pathway name" value="Beta oxidation of lauroyl-CoA to decanoyl-CoA-CoA"/>
</dbReference>
<dbReference type="SABIO-RK" id="P28330"/>
<dbReference type="SignaLink" id="P28330"/>
<dbReference type="UniPathway" id="UPA00660"/>
<dbReference type="BioGRID-ORCS" id="33">
    <property type="hits" value="12 hits in 1147 CRISPR screens"/>
</dbReference>
<dbReference type="ChiTaRS" id="ACADL">
    <property type="organism name" value="human"/>
</dbReference>
<dbReference type="GenomeRNAi" id="33"/>
<dbReference type="Pharos" id="P28330">
    <property type="development level" value="Tbio"/>
</dbReference>
<dbReference type="PRO" id="PR:P28330"/>
<dbReference type="Proteomes" id="UP000005640">
    <property type="component" value="Chromosome 2"/>
</dbReference>
<dbReference type="RNAct" id="P28330">
    <property type="molecule type" value="protein"/>
</dbReference>
<dbReference type="Bgee" id="ENSG00000115361">
    <property type="expression patterns" value="Expressed in body of pancreas and 137 other cell types or tissues"/>
</dbReference>
<dbReference type="GO" id="GO:0005737">
    <property type="term" value="C:cytoplasm"/>
    <property type="evidence" value="ECO:0000318"/>
    <property type="project" value="GO_Central"/>
</dbReference>
<dbReference type="GO" id="GO:0005759">
    <property type="term" value="C:mitochondrial matrix"/>
    <property type="evidence" value="ECO:0000304"/>
    <property type="project" value="Reactome"/>
</dbReference>
<dbReference type="GO" id="GO:0031966">
    <property type="term" value="C:mitochondrial membrane"/>
    <property type="evidence" value="ECO:0007669"/>
    <property type="project" value="Ensembl"/>
</dbReference>
<dbReference type="GO" id="GO:0005739">
    <property type="term" value="C:mitochondrion"/>
    <property type="evidence" value="ECO:0006056"/>
    <property type="project" value="FlyBase"/>
</dbReference>
<dbReference type="GO" id="GO:0050660">
    <property type="term" value="F:flavin adenine dinucleotide binding"/>
    <property type="evidence" value="ECO:0000318"/>
    <property type="project" value="GO_Central"/>
</dbReference>
<dbReference type="GO" id="GO:0004466">
    <property type="term" value="F:long-chain fatty acyl-CoA dehydrogenase activity"/>
    <property type="evidence" value="ECO:0000314"/>
    <property type="project" value="BHF-UCL"/>
</dbReference>
<dbReference type="GO" id="GO:0042803">
    <property type="term" value="F:protein homodimerization activity"/>
    <property type="evidence" value="ECO:0007669"/>
    <property type="project" value="Ensembl"/>
</dbReference>
<dbReference type="GO" id="GO:0042413">
    <property type="term" value="P:carnitine catabolic process"/>
    <property type="evidence" value="ECO:0000250"/>
    <property type="project" value="BHF-UCL"/>
</dbReference>
<dbReference type="GO" id="GO:0019254">
    <property type="term" value="P:carnitine metabolic process, CoA-linked"/>
    <property type="evidence" value="ECO:0000250"/>
    <property type="project" value="BHF-UCL"/>
</dbReference>
<dbReference type="GO" id="GO:0033539">
    <property type="term" value="P:fatty acid beta-oxidation using acyl-CoA dehydrogenase"/>
    <property type="evidence" value="ECO:0000250"/>
    <property type="project" value="BHF-UCL"/>
</dbReference>
<dbReference type="GO" id="GO:0016042">
    <property type="term" value="P:lipid catabolic process"/>
    <property type="evidence" value="ECO:0000250"/>
    <property type="project" value="BHF-UCL"/>
</dbReference>
<dbReference type="GO" id="GO:0042758">
    <property type="term" value="P:long-chain fatty acid catabolic process"/>
    <property type="evidence" value="ECO:0000318"/>
    <property type="project" value="GO_Central"/>
</dbReference>
<dbReference type="GO" id="GO:0045717">
    <property type="term" value="P:negative regulation of fatty acid biosynthetic process"/>
    <property type="evidence" value="ECO:0000250"/>
    <property type="project" value="BHF-UCL"/>
</dbReference>
<dbReference type="GO" id="GO:0046322">
    <property type="term" value="P:negative regulation of fatty acid oxidation"/>
    <property type="evidence" value="ECO:0000250"/>
    <property type="project" value="BHF-UCL"/>
</dbReference>
<dbReference type="GO" id="GO:0120162">
    <property type="term" value="P:positive regulation of cold-induced thermogenesis"/>
    <property type="evidence" value="ECO:0000250"/>
    <property type="project" value="YuBioLab"/>
</dbReference>
<dbReference type="GO" id="GO:0090181">
    <property type="term" value="P:regulation of cholesterol metabolic process"/>
    <property type="evidence" value="ECO:0000250"/>
    <property type="project" value="BHF-UCL"/>
</dbReference>
<dbReference type="GO" id="GO:0001659">
    <property type="term" value="P:temperature homeostasis"/>
    <property type="evidence" value="ECO:0000250"/>
    <property type="project" value="BHF-UCL"/>
</dbReference>
<dbReference type="CDD" id="cd01160">
    <property type="entry name" value="LCAD"/>
    <property type="match status" value="1"/>
</dbReference>
<dbReference type="FunFam" id="2.40.110.10:FF:000002">
    <property type="entry name" value="Acyl-CoA dehydrogenase fadE12"/>
    <property type="match status" value="1"/>
</dbReference>
<dbReference type="FunFam" id="1.20.140.10:FF:000020">
    <property type="entry name" value="Long-chain specific acyl-CoA dehydrogenase, mitochondrial"/>
    <property type="match status" value="1"/>
</dbReference>
<dbReference type="FunFam" id="1.10.540.10:FF:000017">
    <property type="entry name" value="long-chain specific acyl-CoA dehydrogenase, mitochondrial"/>
    <property type="match status" value="1"/>
</dbReference>
<dbReference type="Gene3D" id="1.10.540.10">
    <property type="entry name" value="Acyl-CoA dehydrogenase/oxidase, N-terminal domain"/>
    <property type="match status" value="1"/>
</dbReference>
<dbReference type="Gene3D" id="2.40.110.10">
    <property type="entry name" value="Butyryl-CoA Dehydrogenase, subunit A, domain 2"/>
    <property type="match status" value="1"/>
</dbReference>
<dbReference type="Gene3D" id="1.20.140.10">
    <property type="entry name" value="Butyryl-CoA Dehydrogenase, subunit A, domain 3"/>
    <property type="match status" value="1"/>
</dbReference>
<dbReference type="InterPro" id="IPR050741">
    <property type="entry name" value="Acyl-CoA_dehydrogenase"/>
</dbReference>
<dbReference type="InterPro" id="IPR006089">
    <property type="entry name" value="Acyl-CoA_DH_CS"/>
</dbReference>
<dbReference type="InterPro" id="IPR006091">
    <property type="entry name" value="Acyl-CoA_Oxase/DH_mid-dom"/>
</dbReference>
<dbReference type="InterPro" id="IPR046373">
    <property type="entry name" value="Acyl-CoA_Oxase/DH_mid-dom_sf"/>
</dbReference>
<dbReference type="InterPro" id="IPR036250">
    <property type="entry name" value="AcylCo_DH-like_C"/>
</dbReference>
<dbReference type="InterPro" id="IPR009075">
    <property type="entry name" value="AcylCo_DH/oxidase_C"/>
</dbReference>
<dbReference type="InterPro" id="IPR013786">
    <property type="entry name" value="AcylCoA_DH/ox_N"/>
</dbReference>
<dbReference type="InterPro" id="IPR037069">
    <property type="entry name" value="AcylCoA_DH/ox_N_sf"/>
</dbReference>
<dbReference type="InterPro" id="IPR009100">
    <property type="entry name" value="AcylCoA_DH/oxidase_NM_dom_sf"/>
</dbReference>
<dbReference type="InterPro" id="IPR034179">
    <property type="entry name" value="LCAD"/>
</dbReference>
<dbReference type="PANTHER" id="PTHR48083:SF20">
    <property type="entry name" value="LONG-CHAIN SPECIFIC ACYL-COA DEHYDROGENASE, MITOCHONDRIAL"/>
    <property type="match status" value="1"/>
</dbReference>
<dbReference type="PANTHER" id="PTHR48083">
    <property type="entry name" value="MEDIUM-CHAIN SPECIFIC ACYL-COA DEHYDROGENASE, MITOCHONDRIAL-RELATED"/>
    <property type="match status" value="1"/>
</dbReference>
<dbReference type="Pfam" id="PF00441">
    <property type="entry name" value="Acyl-CoA_dh_1"/>
    <property type="match status" value="1"/>
</dbReference>
<dbReference type="Pfam" id="PF02770">
    <property type="entry name" value="Acyl-CoA_dh_M"/>
    <property type="match status" value="1"/>
</dbReference>
<dbReference type="Pfam" id="PF02771">
    <property type="entry name" value="Acyl-CoA_dh_N"/>
    <property type="match status" value="1"/>
</dbReference>
<dbReference type="SUPFAM" id="SSF47203">
    <property type="entry name" value="Acyl-CoA dehydrogenase C-terminal domain-like"/>
    <property type="match status" value="1"/>
</dbReference>
<dbReference type="SUPFAM" id="SSF56645">
    <property type="entry name" value="Acyl-CoA dehydrogenase NM domain-like"/>
    <property type="match status" value="1"/>
</dbReference>
<dbReference type="PROSITE" id="PS00072">
    <property type="entry name" value="ACYL_COA_DH_1"/>
    <property type="match status" value="1"/>
</dbReference>
<dbReference type="PROSITE" id="PS00073">
    <property type="entry name" value="ACYL_COA_DH_2"/>
    <property type="match status" value="1"/>
</dbReference>
<feature type="transit peptide" description="Mitochondrion" evidence="1">
    <location>
        <begin position="1"/>
        <end position="30"/>
    </location>
</feature>
<feature type="chain" id="PRO_0000000509" description="Long-chain specific acyl-CoA dehydrogenase, mitochondrial">
    <location>
        <begin position="31"/>
        <end position="430"/>
    </location>
</feature>
<feature type="active site" description="Proton acceptor" evidence="6">
    <location>
        <position position="291"/>
    </location>
</feature>
<feature type="binding site" evidence="2">
    <location>
        <begin position="170"/>
        <end position="179"/>
    </location>
    <ligand>
        <name>FAD</name>
        <dbReference type="ChEBI" id="CHEBI:57692"/>
    </ligand>
</feature>
<feature type="binding site" evidence="2">
    <location>
        <position position="179"/>
    </location>
    <ligand>
        <name>substrate</name>
    </ligand>
</feature>
<feature type="binding site" evidence="2">
    <location>
        <begin position="203"/>
        <end position="205"/>
    </location>
    <ligand>
        <name>FAD</name>
        <dbReference type="ChEBI" id="CHEBI:57692"/>
    </ligand>
</feature>
<feature type="binding site" evidence="2">
    <location>
        <begin position="227"/>
        <end position="228"/>
    </location>
    <ligand>
        <name>substrate</name>
    </ligand>
</feature>
<feature type="binding site" evidence="2">
    <location>
        <position position="282"/>
    </location>
    <ligand>
        <name>substrate</name>
    </ligand>
</feature>
<feature type="binding site" evidence="2">
    <location>
        <begin position="289"/>
        <end position="292"/>
    </location>
    <ligand>
        <name>substrate</name>
    </ligand>
</feature>
<feature type="binding site" evidence="2">
    <location>
        <position position="317"/>
    </location>
    <ligand>
        <name>FAD</name>
        <dbReference type="ChEBI" id="CHEBI:57692"/>
    </ligand>
</feature>
<feature type="binding site" evidence="2">
    <location>
        <position position="328"/>
    </location>
    <ligand>
        <name>FAD</name>
        <dbReference type="ChEBI" id="CHEBI:57692"/>
    </ligand>
</feature>
<feature type="binding site" evidence="2">
    <location>
        <begin position="385"/>
        <end position="389"/>
    </location>
    <ligand>
        <name>FAD</name>
        <dbReference type="ChEBI" id="CHEBI:57692"/>
    </ligand>
</feature>
<feature type="binding site" evidence="2">
    <location>
        <begin position="412"/>
        <end position="413"/>
    </location>
    <ligand>
        <name>substrate</name>
    </ligand>
</feature>
<feature type="binding site" evidence="2">
    <location>
        <begin position="414"/>
        <end position="416"/>
    </location>
    <ligand>
        <name>FAD</name>
        <dbReference type="ChEBI" id="CHEBI:57692"/>
    </ligand>
</feature>
<feature type="modified residue" description="N6-acetyllysine" evidence="3">
    <location>
        <position position="42"/>
    </location>
</feature>
<feature type="modified residue" description="Phosphoserine" evidence="1">
    <location>
        <position position="54"/>
    </location>
</feature>
<feature type="modified residue" description="N6-acetyllysine; alternate" evidence="3">
    <location>
        <position position="66"/>
    </location>
</feature>
<feature type="modified residue" description="N6-succinyllysine; alternate" evidence="3">
    <location>
        <position position="66"/>
    </location>
</feature>
<feature type="modified residue" description="N6-acetyllysine; alternate" evidence="3">
    <location>
        <position position="81"/>
    </location>
</feature>
<feature type="modified residue" description="N6-succinyllysine; alternate" evidence="3">
    <location>
        <position position="81"/>
    </location>
</feature>
<feature type="modified residue" description="N6-acetyllysine" evidence="3">
    <location>
        <position position="92"/>
    </location>
</feature>
<feature type="modified residue" description="N6-acetyllysine" evidence="3">
    <location>
        <position position="95"/>
    </location>
</feature>
<feature type="modified residue" description="N6-succinyllysine" evidence="3">
    <location>
        <position position="165"/>
    </location>
</feature>
<feature type="modified residue" description="N6-succinyllysine" evidence="3">
    <location>
        <position position="240"/>
    </location>
</feature>
<feature type="modified residue" description="N6-acetyllysine; alternate" evidence="3">
    <location>
        <position position="254"/>
    </location>
</feature>
<feature type="modified residue" description="N6-succinyllysine; alternate" evidence="3">
    <location>
        <position position="254"/>
    </location>
</feature>
<feature type="modified residue" description="N6-acetyllysine; alternate" evidence="3">
    <location>
        <position position="279"/>
    </location>
</feature>
<feature type="modified residue" description="N6-succinyllysine; alternate" evidence="3">
    <location>
        <position position="279"/>
    </location>
</feature>
<feature type="modified residue" description="N6-acetyllysine" evidence="3">
    <location>
        <position position="318"/>
    </location>
</feature>
<feature type="modified residue" description="N6-acetyllysine; alternate" evidence="3">
    <location>
        <position position="322"/>
    </location>
</feature>
<feature type="modified residue" description="N6-succinyllysine; alternate" evidence="3">
    <location>
        <position position="322"/>
    </location>
</feature>
<feature type="modified residue" description="N6-acetyllysine" evidence="3">
    <location>
        <position position="358"/>
    </location>
</feature>
<feature type="modified residue" description="Phosphoserine" evidence="3">
    <location>
        <position position="362"/>
    </location>
</feature>
<feature type="sequence variant" id="VAR_000328" description="In dbSNP:rs1801204." evidence="8">
    <original>S</original>
    <variation>T</variation>
    <location>
        <position position="303"/>
    </location>
</feature>
<feature type="sequence variant" id="VAR_000329" description="In dbSNP:rs2286963." evidence="4 8">
    <original>K</original>
    <variation>Q</variation>
    <location>
        <position position="333"/>
    </location>
</feature>
<feature type="mutagenesis site" description="Loss of long-chain-acyl-CoA dehydrogenase activity. No effect on protein abundance. No effect on solubility. No effect on substrate binding." evidence="6">
    <original>E</original>
    <variation>Q</variation>
    <location>
        <position position="291"/>
    </location>
</feature>
<name>ACADL_HUMAN</name>
<protein>
    <recommendedName>
        <fullName>Long-chain specific acyl-CoA dehydrogenase, mitochondrial</fullName>
        <shortName>LCAD</shortName>
        <ecNumber evidence="5 6 7">1.3.8.8</ecNumber>
    </recommendedName>
</protein>
<accession>P28330</accession>
<accession>B2R8T3</accession>
<accession>Q8IUN8</accession>
<keyword id="KW-0002">3D-structure</keyword>
<keyword id="KW-0007">Acetylation</keyword>
<keyword id="KW-0274">FAD</keyword>
<keyword id="KW-0276">Fatty acid metabolism</keyword>
<keyword id="KW-0285">Flavoprotein</keyword>
<keyword id="KW-0443">Lipid metabolism</keyword>
<keyword id="KW-0496">Mitochondrion</keyword>
<keyword id="KW-0560">Oxidoreductase</keyword>
<keyword id="KW-0597">Phosphoprotein</keyword>
<keyword id="KW-1267">Proteomics identification</keyword>
<keyword id="KW-1185">Reference proteome</keyword>
<keyword id="KW-0809">Transit peptide</keyword>
<organism>
    <name type="scientific">Homo sapiens</name>
    <name type="common">Human</name>
    <dbReference type="NCBI Taxonomy" id="9606"/>
    <lineage>
        <taxon>Eukaryota</taxon>
        <taxon>Metazoa</taxon>
        <taxon>Chordata</taxon>
        <taxon>Craniata</taxon>
        <taxon>Vertebrata</taxon>
        <taxon>Euteleostomi</taxon>
        <taxon>Mammalia</taxon>
        <taxon>Eutheria</taxon>
        <taxon>Euarchontoglires</taxon>
        <taxon>Primates</taxon>
        <taxon>Haplorrhini</taxon>
        <taxon>Catarrhini</taxon>
        <taxon>Hominidae</taxon>
        <taxon>Homo</taxon>
    </lineage>
</organism>
<gene>
    <name evidence="12" type="primary">ACADL</name>
</gene>
<evidence type="ECO:0000250" key="1">
    <source>
        <dbReference type="UniProtKB" id="P15650"/>
    </source>
</evidence>
<evidence type="ECO:0000250" key="2">
    <source>
        <dbReference type="UniProtKB" id="P26440"/>
    </source>
</evidence>
<evidence type="ECO:0000250" key="3">
    <source>
        <dbReference type="UniProtKB" id="P51174"/>
    </source>
</evidence>
<evidence type="ECO:0000269" key="4">
    <source>
    </source>
</evidence>
<evidence type="ECO:0000269" key="5">
    <source>
    </source>
</evidence>
<evidence type="ECO:0000269" key="6">
    <source>
    </source>
</evidence>
<evidence type="ECO:0000269" key="7">
    <source>
    </source>
</evidence>
<evidence type="ECO:0000269" key="8">
    <source ref="11"/>
</evidence>
<evidence type="ECO:0000305" key="9"/>
<evidence type="ECO:0000305" key="10">
    <source>
    </source>
</evidence>
<evidence type="ECO:0000305" key="11">
    <source>
    </source>
</evidence>
<evidence type="ECO:0000312" key="12">
    <source>
        <dbReference type="HGNC" id="HGNC:88"/>
    </source>
</evidence>
<reference key="1">
    <citation type="journal article" date="1991" name="Genomics">
        <title>Molecular cloning and nucleotide sequence of cDNAs encoding human long-chain acyl-CoA dehydrogenase and assignment of the location of its gene (ACADL) to chromosome 2.</title>
        <authorList>
            <person name="Indo Y."/>
            <person name="Yang-Feng T."/>
            <person name="Glassberg R."/>
            <person name="Tanaka K."/>
        </authorList>
    </citation>
    <scope>NUCLEOTIDE SEQUENCE [MRNA]</scope>
</reference>
<reference key="2">
    <citation type="journal article" date="1992" name="Genomics">
        <authorList>
            <person name="Indo Y."/>
            <person name="Yang-Feng T."/>
            <person name="Glassberg R."/>
            <person name="Tanaka K."/>
        </authorList>
    </citation>
    <scope>ERRATUM OF PUBMED:1774065</scope>
</reference>
<reference key="3">
    <citation type="journal article" date="2004" name="Nat. Genet.">
        <title>Complete sequencing and characterization of 21,243 full-length human cDNAs.</title>
        <authorList>
            <person name="Ota T."/>
            <person name="Suzuki Y."/>
            <person name="Nishikawa T."/>
            <person name="Otsuki T."/>
            <person name="Sugiyama T."/>
            <person name="Irie R."/>
            <person name="Wakamatsu A."/>
            <person name="Hayashi K."/>
            <person name="Sato H."/>
            <person name="Nagai K."/>
            <person name="Kimura K."/>
            <person name="Makita H."/>
            <person name="Sekine M."/>
            <person name="Obayashi M."/>
            <person name="Nishi T."/>
            <person name="Shibahara T."/>
            <person name="Tanaka T."/>
            <person name="Ishii S."/>
            <person name="Yamamoto J."/>
            <person name="Saito K."/>
            <person name="Kawai Y."/>
            <person name="Isono Y."/>
            <person name="Nakamura Y."/>
            <person name="Nagahari K."/>
            <person name="Murakami K."/>
            <person name="Yasuda T."/>
            <person name="Iwayanagi T."/>
            <person name="Wagatsuma M."/>
            <person name="Shiratori A."/>
            <person name="Sudo H."/>
            <person name="Hosoiri T."/>
            <person name="Kaku Y."/>
            <person name="Kodaira H."/>
            <person name="Kondo H."/>
            <person name="Sugawara M."/>
            <person name="Takahashi M."/>
            <person name="Kanda K."/>
            <person name="Yokoi T."/>
            <person name="Furuya T."/>
            <person name="Kikkawa E."/>
            <person name="Omura Y."/>
            <person name="Abe K."/>
            <person name="Kamihara K."/>
            <person name="Katsuta N."/>
            <person name="Sato K."/>
            <person name="Tanikawa M."/>
            <person name="Yamazaki M."/>
            <person name="Ninomiya K."/>
            <person name="Ishibashi T."/>
            <person name="Yamashita H."/>
            <person name="Murakawa K."/>
            <person name="Fujimori K."/>
            <person name="Tanai H."/>
            <person name="Kimata M."/>
            <person name="Watanabe M."/>
            <person name="Hiraoka S."/>
            <person name="Chiba Y."/>
            <person name="Ishida S."/>
            <person name="Ono Y."/>
            <person name="Takiguchi S."/>
            <person name="Watanabe S."/>
            <person name="Yosida M."/>
            <person name="Hotuta T."/>
            <person name="Kusano J."/>
            <person name="Kanehori K."/>
            <person name="Takahashi-Fujii A."/>
            <person name="Hara H."/>
            <person name="Tanase T.-O."/>
            <person name="Nomura Y."/>
            <person name="Togiya S."/>
            <person name="Komai F."/>
            <person name="Hara R."/>
            <person name="Takeuchi K."/>
            <person name="Arita M."/>
            <person name="Imose N."/>
            <person name="Musashino K."/>
            <person name="Yuuki H."/>
            <person name="Oshima A."/>
            <person name="Sasaki N."/>
            <person name="Aotsuka S."/>
            <person name="Yoshikawa Y."/>
            <person name="Matsunawa H."/>
            <person name="Ichihara T."/>
            <person name="Shiohata N."/>
            <person name="Sano S."/>
            <person name="Moriya S."/>
            <person name="Momiyama H."/>
            <person name="Satoh N."/>
            <person name="Takami S."/>
            <person name="Terashima Y."/>
            <person name="Suzuki O."/>
            <person name="Nakagawa S."/>
            <person name="Senoh A."/>
            <person name="Mizoguchi H."/>
            <person name="Goto Y."/>
            <person name="Shimizu F."/>
            <person name="Wakebe H."/>
            <person name="Hishigaki H."/>
            <person name="Watanabe T."/>
            <person name="Sugiyama A."/>
            <person name="Takemoto M."/>
            <person name="Kawakami B."/>
            <person name="Yamazaki M."/>
            <person name="Watanabe K."/>
            <person name="Kumagai A."/>
            <person name="Itakura S."/>
            <person name="Fukuzumi Y."/>
            <person name="Fujimori Y."/>
            <person name="Komiyama M."/>
            <person name="Tashiro H."/>
            <person name="Tanigami A."/>
            <person name="Fujiwara T."/>
            <person name="Ono T."/>
            <person name="Yamada K."/>
            <person name="Fujii Y."/>
            <person name="Ozaki K."/>
            <person name="Hirao M."/>
            <person name="Ohmori Y."/>
            <person name="Kawabata A."/>
            <person name="Hikiji T."/>
            <person name="Kobatake N."/>
            <person name="Inagaki H."/>
            <person name="Ikema Y."/>
            <person name="Okamoto S."/>
            <person name="Okitani R."/>
            <person name="Kawakami T."/>
            <person name="Noguchi S."/>
            <person name="Itoh T."/>
            <person name="Shigeta K."/>
            <person name="Senba T."/>
            <person name="Matsumura K."/>
            <person name="Nakajima Y."/>
            <person name="Mizuno T."/>
            <person name="Morinaga M."/>
            <person name="Sasaki M."/>
            <person name="Togashi T."/>
            <person name="Oyama M."/>
            <person name="Hata H."/>
            <person name="Watanabe M."/>
            <person name="Komatsu T."/>
            <person name="Mizushima-Sugano J."/>
            <person name="Satoh T."/>
            <person name="Shirai Y."/>
            <person name="Takahashi Y."/>
            <person name="Nakagawa K."/>
            <person name="Okumura K."/>
            <person name="Nagase T."/>
            <person name="Nomura N."/>
            <person name="Kikuchi H."/>
            <person name="Masuho Y."/>
            <person name="Yamashita R."/>
            <person name="Nakai K."/>
            <person name="Yada T."/>
            <person name="Nakamura Y."/>
            <person name="Ohara O."/>
            <person name="Isogai T."/>
            <person name="Sugano S."/>
        </authorList>
    </citation>
    <scope>NUCLEOTIDE SEQUENCE [LARGE SCALE MRNA]</scope>
    <scope>VARIANT GLN-333</scope>
    <source>
        <tissue>Brain</tissue>
    </source>
</reference>
<reference key="4">
    <citation type="journal article" date="2005" name="Nature">
        <title>Generation and annotation of the DNA sequences of human chromosomes 2 and 4.</title>
        <authorList>
            <person name="Hillier L.W."/>
            <person name="Graves T.A."/>
            <person name="Fulton R.S."/>
            <person name="Fulton L.A."/>
            <person name="Pepin K.H."/>
            <person name="Minx P."/>
            <person name="Wagner-McPherson C."/>
            <person name="Layman D."/>
            <person name="Wylie K."/>
            <person name="Sekhon M."/>
            <person name="Becker M.C."/>
            <person name="Fewell G.A."/>
            <person name="Delehaunty K.D."/>
            <person name="Miner T.L."/>
            <person name="Nash W.E."/>
            <person name="Kremitzki C."/>
            <person name="Oddy L."/>
            <person name="Du H."/>
            <person name="Sun H."/>
            <person name="Bradshaw-Cordum H."/>
            <person name="Ali J."/>
            <person name="Carter J."/>
            <person name="Cordes M."/>
            <person name="Harris A."/>
            <person name="Isak A."/>
            <person name="van Brunt A."/>
            <person name="Nguyen C."/>
            <person name="Du F."/>
            <person name="Courtney L."/>
            <person name="Kalicki J."/>
            <person name="Ozersky P."/>
            <person name="Abbott S."/>
            <person name="Armstrong J."/>
            <person name="Belter E.A."/>
            <person name="Caruso L."/>
            <person name="Cedroni M."/>
            <person name="Cotton M."/>
            <person name="Davidson T."/>
            <person name="Desai A."/>
            <person name="Elliott G."/>
            <person name="Erb T."/>
            <person name="Fronick C."/>
            <person name="Gaige T."/>
            <person name="Haakenson W."/>
            <person name="Haglund K."/>
            <person name="Holmes A."/>
            <person name="Harkins R."/>
            <person name="Kim K."/>
            <person name="Kruchowski S.S."/>
            <person name="Strong C.M."/>
            <person name="Grewal N."/>
            <person name="Goyea E."/>
            <person name="Hou S."/>
            <person name="Levy A."/>
            <person name="Martinka S."/>
            <person name="Mead K."/>
            <person name="McLellan M.D."/>
            <person name="Meyer R."/>
            <person name="Randall-Maher J."/>
            <person name="Tomlinson C."/>
            <person name="Dauphin-Kohlberg S."/>
            <person name="Kozlowicz-Reilly A."/>
            <person name="Shah N."/>
            <person name="Swearengen-Shahid S."/>
            <person name="Snider J."/>
            <person name="Strong J.T."/>
            <person name="Thompson J."/>
            <person name="Yoakum M."/>
            <person name="Leonard S."/>
            <person name="Pearman C."/>
            <person name="Trani L."/>
            <person name="Radionenko M."/>
            <person name="Waligorski J.E."/>
            <person name="Wang C."/>
            <person name="Rock S.M."/>
            <person name="Tin-Wollam A.-M."/>
            <person name="Maupin R."/>
            <person name="Latreille P."/>
            <person name="Wendl M.C."/>
            <person name="Yang S.-P."/>
            <person name="Pohl C."/>
            <person name="Wallis J.W."/>
            <person name="Spieth J."/>
            <person name="Bieri T.A."/>
            <person name="Berkowicz N."/>
            <person name="Nelson J.O."/>
            <person name="Osborne J."/>
            <person name="Ding L."/>
            <person name="Meyer R."/>
            <person name="Sabo A."/>
            <person name="Shotland Y."/>
            <person name="Sinha P."/>
            <person name="Wohldmann P.E."/>
            <person name="Cook L.L."/>
            <person name="Hickenbotham M.T."/>
            <person name="Eldred J."/>
            <person name="Williams D."/>
            <person name="Jones T.A."/>
            <person name="She X."/>
            <person name="Ciccarelli F.D."/>
            <person name="Izaurralde E."/>
            <person name="Taylor J."/>
            <person name="Schmutz J."/>
            <person name="Myers R.M."/>
            <person name="Cox D.R."/>
            <person name="Huang X."/>
            <person name="McPherson J.D."/>
            <person name="Mardis E.R."/>
            <person name="Clifton S.W."/>
            <person name="Warren W.C."/>
            <person name="Chinwalla A.T."/>
            <person name="Eddy S.R."/>
            <person name="Marra M.A."/>
            <person name="Ovcharenko I."/>
            <person name="Furey T.S."/>
            <person name="Miller W."/>
            <person name="Eichler E.E."/>
            <person name="Bork P."/>
            <person name="Suyama M."/>
            <person name="Torrents D."/>
            <person name="Waterston R.H."/>
            <person name="Wilson R.K."/>
        </authorList>
    </citation>
    <scope>NUCLEOTIDE SEQUENCE [LARGE SCALE GENOMIC DNA]</scope>
</reference>
<reference key="5">
    <citation type="submission" date="2005-07" db="EMBL/GenBank/DDBJ databases">
        <authorList>
            <person name="Mural R.J."/>
            <person name="Istrail S."/>
            <person name="Sutton G.G."/>
            <person name="Florea L."/>
            <person name="Halpern A.L."/>
            <person name="Mobarry C.M."/>
            <person name="Lippert R."/>
            <person name="Walenz B."/>
            <person name="Shatkay H."/>
            <person name="Dew I."/>
            <person name="Miller J.R."/>
            <person name="Flanigan M.J."/>
            <person name="Edwards N.J."/>
            <person name="Bolanos R."/>
            <person name="Fasulo D."/>
            <person name="Halldorsson B.V."/>
            <person name="Hannenhalli S."/>
            <person name="Turner R."/>
            <person name="Yooseph S."/>
            <person name="Lu F."/>
            <person name="Nusskern D.R."/>
            <person name="Shue B.C."/>
            <person name="Zheng X.H."/>
            <person name="Zhong F."/>
            <person name="Delcher A.L."/>
            <person name="Huson D.H."/>
            <person name="Kravitz S.A."/>
            <person name="Mouchard L."/>
            <person name="Reinert K."/>
            <person name="Remington K.A."/>
            <person name="Clark A.G."/>
            <person name="Waterman M.S."/>
            <person name="Eichler E.E."/>
            <person name="Adams M.D."/>
            <person name="Hunkapiller M.W."/>
            <person name="Myers E.W."/>
            <person name="Venter J.C."/>
        </authorList>
    </citation>
    <scope>NUCLEOTIDE SEQUENCE [LARGE SCALE GENOMIC DNA]</scope>
</reference>
<reference key="6">
    <citation type="journal article" date="2004" name="Genome Res.">
        <title>The status, quality, and expansion of the NIH full-length cDNA project: the Mammalian Gene Collection (MGC).</title>
        <authorList>
            <consortium name="The MGC Project Team"/>
        </authorList>
    </citation>
    <scope>NUCLEOTIDE SEQUENCE [LARGE SCALE MRNA]</scope>
    <source>
        <tissue>Brain</tissue>
        <tissue>Colon</tissue>
    </source>
</reference>
<reference key="7">
    <citation type="journal article" date="1994" name="Biochemistry">
        <title>Identification of the catalytic base in long chain acyl-CoA dehydrogenase.</title>
        <authorList>
            <person name="Djordjevic S."/>
            <person name="Dong Y."/>
            <person name="Paschke R."/>
            <person name="Frerman F.E."/>
            <person name="Strauss A.W."/>
            <person name="Kim J.J."/>
        </authorList>
    </citation>
    <scope>CATALYTIC ACTIVITY</scope>
    <scope>ACTIVE SITE</scope>
    <scope>MUTAGENESIS OF GLU-291</scope>
</reference>
<reference key="8">
    <citation type="journal article" date="1996" name="Biochemistry">
        <title>Medium-long-chain chimeric human Acyl-CoA dehydrogenase: medium-chain enzyme with the active center base arrangement of long-chain Acyl-CoA dehydrogenase.</title>
        <authorList>
            <person name="Nandy A."/>
            <person name="Kieweg V."/>
            <person name="Kraeutle F.G."/>
            <person name="Vock P."/>
            <person name="Kuechler B."/>
            <person name="Bross P."/>
            <person name="Kim J.J."/>
            <person name="Rasched I."/>
            <person name="Ghisla S."/>
        </authorList>
    </citation>
    <scope>FUNCTION</scope>
    <scope>CATALYTIC ACTIVITY</scope>
    <scope>BIOPHYSICOCHEMICAL PROPERTIES</scope>
    <scope>SUBSTRATE SPECIFICITY</scope>
</reference>
<reference key="9">
    <citation type="journal article" date="2011" name="Mol. Genet. Metab.">
        <title>Identification and characterization of new long chain acyl-CoA dehydrogenases.</title>
        <authorList>
            <person name="He M."/>
            <person name="Pei Z."/>
            <person name="Mohsen A.W."/>
            <person name="Watkins P."/>
            <person name="Murdoch G."/>
            <person name="Van Veldhoven P.P."/>
            <person name="Ensenauer R."/>
            <person name="Vockley J."/>
        </authorList>
    </citation>
    <scope>FUNCTION</scope>
    <scope>CATALYTIC ACTIVITY</scope>
    <scope>SUBSTRATE SPECIFICITY</scope>
</reference>
<reference key="10">
    <citation type="journal article" date="2014" name="J. Proteomics">
        <title>An enzyme assisted RP-RPLC approach for in-depth analysis of human liver phosphoproteome.</title>
        <authorList>
            <person name="Bian Y."/>
            <person name="Song C."/>
            <person name="Cheng K."/>
            <person name="Dong M."/>
            <person name="Wang F."/>
            <person name="Huang J."/>
            <person name="Sun D."/>
            <person name="Wang L."/>
            <person name="Ye M."/>
            <person name="Zou H."/>
        </authorList>
    </citation>
    <scope>IDENTIFICATION BY MASS SPECTROMETRY [LARGE SCALE ANALYSIS]</scope>
    <source>
        <tissue>Liver</tissue>
    </source>
</reference>
<reference key="11">
    <citation type="journal article" date="1991" name="Am. J. Hum. Genet.">
        <title>The molecular basis of human long chain acyl-CoA dehydrogenase deficiency.</title>
        <authorList>
            <person name="Kelly D."/>
            <person name="Ogden M."/>
            <person name="Hale D."/>
            <person name="Hainline B."/>
            <person name="Strauss A."/>
        </authorList>
    </citation>
    <scope>VARIANTS THR-303 AND GLN-333</scope>
</reference>
<comment type="function">
    <text evidence="1 5 7">Long-chain specific acyl-CoA dehydrogenase is one of the acyl-CoA dehydrogenases that catalyze the first step of mitochondrial fatty acid beta-oxidation, an aerobic process breaking down fatty acids into acetyl-CoA and allowing the production of energy from fats (By similarity). The first step of fatty acid beta-oxidation consists in the removal of one hydrogen from C-2 and C-3 of the straight-chain fatty acyl-CoA thioester, resulting in the formation of trans-2-enoyl-CoA (By similarity). Among the different mitochondrial acyl-CoA dehydrogenases, long-chain specific acyl-CoA dehydrogenase can act on saturated and unsaturated acyl-CoAs with 6 to 24 carbons with a preference for 8 to 18 carbons long primary chains (PubMed:21237683, PubMed:8823175).</text>
</comment>
<comment type="catalytic activity">
    <reaction evidence="5 6 7">
        <text>a long-chain 2,3-saturated fatty acyl-CoA + oxidized [electron-transfer flavoprotein] + H(+) = a long-chain (2E)-enoyl-CoA + reduced [electron-transfer flavoprotein]</text>
        <dbReference type="Rhea" id="RHEA:17721"/>
        <dbReference type="Rhea" id="RHEA-COMP:10685"/>
        <dbReference type="Rhea" id="RHEA-COMP:10686"/>
        <dbReference type="ChEBI" id="CHEBI:15378"/>
        <dbReference type="ChEBI" id="CHEBI:57692"/>
        <dbReference type="ChEBI" id="CHEBI:58307"/>
        <dbReference type="ChEBI" id="CHEBI:83721"/>
        <dbReference type="ChEBI" id="CHEBI:83727"/>
        <dbReference type="EC" id="1.3.8.8"/>
    </reaction>
    <physiologicalReaction direction="left-to-right" evidence="11">
        <dbReference type="Rhea" id="RHEA:17722"/>
    </physiologicalReaction>
</comment>
<comment type="catalytic activity">
    <reaction evidence="5 7">
        <text>hexanoyl-CoA + oxidized [electron-transfer flavoprotein] + H(+) = (2E)-hexenoyl-CoA + reduced [electron-transfer flavoprotein]</text>
        <dbReference type="Rhea" id="RHEA:43464"/>
        <dbReference type="Rhea" id="RHEA-COMP:10685"/>
        <dbReference type="Rhea" id="RHEA-COMP:10686"/>
        <dbReference type="ChEBI" id="CHEBI:15378"/>
        <dbReference type="ChEBI" id="CHEBI:57692"/>
        <dbReference type="ChEBI" id="CHEBI:58307"/>
        <dbReference type="ChEBI" id="CHEBI:62077"/>
        <dbReference type="ChEBI" id="CHEBI:62620"/>
    </reaction>
    <physiologicalReaction direction="left-to-right" evidence="11">
        <dbReference type="Rhea" id="RHEA:43465"/>
    </physiologicalReaction>
</comment>
<comment type="catalytic activity">
    <reaction evidence="5 6 7">
        <text>octanoyl-CoA + oxidized [electron-transfer flavoprotein] + H(+) = (2E)-octenoyl-CoA + reduced [electron-transfer flavoprotein]</text>
        <dbReference type="Rhea" id="RHEA:48180"/>
        <dbReference type="Rhea" id="RHEA-COMP:10685"/>
        <dbReference type="Rhea" id="RHEA-COMP:10686"/>
        <dbReference type="ChEBI" id="CHEBI:15378"/>
        <dbReference type="ChEBI" id="CHEBI:57386"/>
        <dbReference type="ChEBI" id="CHEBI:57692"/>
        <dbReference type="ChEBI" id="CHEBI:58307"/>
        <dbReference type="ChEBI" id="CHEBI:62242"/>
    </reaction>
    <physiologicalReaction direction="left-to-right" evidence="11">
        <dbReference type="Rhea" id="RHEA:48181"/>
    </physiologicalReaction>
</comment>
<comment type="catalytic activity">
    <reaction evidence="5 6 7">
        <text>decanoyl-CoA + oxidized [electron-transfer flavoprotein] + H(+) = (2E)-decenoyl-CoA + reduced [electron-transfer flavoprotein]</text>
        <dbReference type="Rhea" id="RHEA:48176"/>
        <dbReference type="Rhea" id="RHEA-COMP:10685"/>
        <dbReference type="Rhea" id="RHEA-COMP:10686"/>
        <dbReference type="ChEBI" id="CHEBI:15378"/>
        <dbReference type="ChEBI" id="CHEBI:57692"/>
        <dbReference type="ChEBI" id="CHEBI:58307"/>
        <dbReference type="ChEBI" id="CHEBI:61406"/>
        <dbReference type="ChEBI" id="CHEBI:61430"/>
    </reaction>
    <physiologicalReaction direction="left-to-right" evidence="11">
        <dbReference type="Rhea" id="RHEA:48177"/>
    </physiologicalReaction>
</comment>
<comment type="catalytic activity">
    <reaction evidence="5 7">
        <text>dodecanoyl-CoA + oxidized [electron-transfer flavoprotein] + H(+) = (2E)-dodecenoyl-CoA + reduced [electron-transfer flavoprotein]</text>
        <dbReference type="Rhea" id="RHEA:47296"/>
        <dbReference type="Rhea" id="RHEA-COMP:10685"/>
        <dbReference type="Rhea" id="RHEA-COMP:10686"/>
        <dbReference type="ChEBI" id="CHEBI:15378"/>
        <dbReference type="ChEBI" id="CHEBI:57330"/>
        <dbReference type="ChEBI" id="CHEBI:57375"/>
        <dbReference type="ChEBI" id="CHEBI:57692"/>
        <dbReference type="ChEBI" id="CHEBI:58307"/>
    </reaction>
    <physiologicalReaction direction="left-to-right" evidence="11">
        <dbReference type="Rhea" id="RHEA:47297"/>
    </physiologicalReaction>
</comment>
<comment type="catalytic activity">
    <reaction evidence="5 7">
        <text>tetradecanoyl-CoA + oxidized [electron-transfer flavoprotein] + H(+) = (2E)-tetradecenoyl-CoA + reduced [electron-transfer flavoprotein]</text>
        <dbReference type="Rhea" id="RHEA:47316"/>
        <dbReference type="Rhea" id="RHEA-COMP:10685"/>
        <dbReference type="Rhea" id="RHEA-COMP:10686"/>
        <dbReference type="ChEBI" id="CHEBI:15378"/>
        <dbReference type="ChEBI" id="CHEBI:57385"/>
        <dbReference type="ChEBI" id="CHEBI:57692"/>
        <dbReference type="ChEBI" id="CHEBI:58307"/>
        <dbReference type="ChEBI" id="CHEBI:61405"/>
    </reaction>
    <physiologicalReaction direction="left-to-right" evidence="11">
        <dbReference type="Rhea" id="RHEA:47317"/>
    </physiologicalReaction>
</comment>
<comment type="catalytic activity">
    <reaction evidence="5 6 7">
        <text>oxidized [electron-transfer flavoprotein] + hexadecanoyl-CoA + H(+) = (2E)-hexadecenoyl-CoA + reduced [electron-transfer flavoprotein]</text>
        <dbReference type="Rhea" id="RHEA:43448"/>
        <dbReference type="Rhea" id="RHEA-COMP:10685"/>
        <dbReference type="Rhea" id="RHEA-COMP:10686"/>
        <dbReference type="ChEBI" id="CHEBI:15378"/>
        <dbReference type="ChEBI" id="CHEBI:57379"/>
        <dbReference type="ChEBI" id="CHEBI:57692"/>
        <dbReference type="ChEBI" id="CHEBI:58307"/>
        <dbReference type="ChEBI" id="CHEBI:61526"/>
    </reaction>
    <physiologicalReaction direction="left-to-right" evidence="11">
        <dbReference type="Rhea" id="RHEA:43449"/>
    </physiologicalReaction>
</comment>
<comment type="catalytic activity">
    <reaction evidence="5 7">
        <text>octadecanoyl-CoA + oxidized [electron-transfer flavoprotein] + H(+) = (2E)-octadecenoyl-CoA + reduced [electron-transfer flavoprotein]</text>
        <dbReference type="Rhea" id="RHEA:47240"/>
        <dbReference type="Rhea" id="RHEA-COMP:10685"/>
        <dbReference type="Rhea" id="RHEA-COMP:10686"/>
        <dbReference type="ChEBI" id="CHEBI:15378"/>
        <dbReference type="ChEBI" id="CHEBI:57394"/>
        <dbReference type="ChEBI" id="CHEBI:57692"/>
        <dbReference type="ChEBI" id="CHEBI:58307"/>
        <dbReference type="ChEBI" id="CHEBI:71412"/>
    </reaction>
    <physiologicalReaction direction="left-to-right" evidence="11">
        <dbReference type="Rhea" id="RHEA:47241"/>
    </physiologicalReaction>
</comment>
<comment type="catalytic activity">
    <reaction evidence="5">
        <text>eicosanoyl-CoA + oxidized [electron-transfer flavoprotein] + H(+) = (2E)-eicosenoyl-CoA + reduced [electron-transfer flavoprotein]</text>
        <dbReference type="Rhea" id="RHEA:47236"/>
        <dbReference type="Rhea" id="RHEA-COMP:10685"/>
        <dbReference type="Rhea" id="RHEA-COMP:10686"/>
        <dbReference type="ChEBI" id="CHEBI:15378"/>
        <dbReference type="ChEBI" id="CHEBI:57380"/>
        <dbReference type="ChEBI" id="CHEBI:57692"/>
        <dbReference type="ChEBI" id="CHEBI:58307"/>
        <dbReference type="ChEBI" id="CHEBI:74691"/>
    </reaction>
    <physiologicalReaction direction="left-to-right" evidence="10">
        <dbReference type="Rhea" id="RHEA:47237"/>
    </physiologicalReaction>
</comment>
<comment type="catalytic activity">
    <reaction evidence="5">
        <text>docosanoyl-CoA + oxidized [electron-transfer flavoprotein] + H(+) = (2E)-docosenoyl-CoA + reduced [electron-transfer flavoprotein]</text>
        <dbReference type="Rhea" id="RHEA:47228"/>
        <dbReference type="Rhea" id="RHEA-COMP:10685"/>
        <dbReference type="Rhea" id="RHEA-COMP:10686"/>
        <dbReference type="ChEBI" id="CHEBI:15378"/>
        <dbReference type="ChEBI" id="CHEBI:57692"/>
        <dbReference type="ChEBI" id="CHEBI:58307"/>
        <dbReference type="ChEBI" id="CHEBI:65059"/>
        <dbReference type="ChEBI" id="CHEBI:74692"/>
    </reaction>
    <physiologicalReaction direction="left-to-right" evidence="10">
        <dbReference type="Rhea" id="RHEA:47229"/>
    </physiologicalReaction>
</comment>
<comment type="catalytic activity">
    <reaction evidence="5">
        <text>tetracosanoyl-CoA + oxidized [electron-transfer flavoprotein] + H(+) = (2E)-tetracosenoyl-CoA + reduced [electron-transfer flavoprotein]</text>
        <dbReference type="Rhea" id="RHEA:47232"/>
        <dbReference type="Rhea" id="RHEA-COMP:10685"/>
        <dbReference type="Rhea" id="RHEA-COMP:10686"/>
        <dbReference type="ChEBI" id="CHEBI:15378"/>
        <dbReference type="ChEBI" id="CHEBI:57692"/>
        <dbReference type="ChEBI" id="CHEBI:58307"/>
        <dbReference type="ChEBI" id="CHEBI:65052"/>
        <dbReference type="ChEBI" id="CHEBI:74693"/>
    </reaction>
    <physiologicalReaction direction="left-to-right" evidence="10">
        <dbReference type="Rhea" id="RHEA:47233"/>
    </physiologicalReaction>
</comment>
<comment type="catalytic activity">
    <reaction evidence="1">
        <text>(5E)-tetradecenoyl-CoA + oxidized [electron-transfer flavoprotein] + H(+) = (2E,5E)-tetradecadienoyl-CoA + reduced [electron-transfer flavoprotein]</text>
        <dbReference type="Rhea" id="RHEA:49828"/>
        <dbReference type="Rhea" id="RHEA-COMP:10685"/>
        <dbReference type="Rhea" id="RHEA-COMP:10686"/>
        <dbReference type="ChEBI" id="CHEBI:15378"/>
        <dbReference type="ChEBI" id="CHEBI:57692"/>
        <dbReference type="ChEBI" id="CHEBI:58307"/>
        <dbReference type="ChEBI" id="CHEBI:131943"/>
        <dbReference type="ChEBI" id="CHEBI:131944"/>
    </reaction>
    <physiologicalReaction direction="left-to-right" evidence="1">
        <dbReference type="Rhea" id="RHEA:49829"/>
    </physiologicalReaction>
</comment>
<comment type="catalytic activity">
    <reaction evidence="1">
        <text>(5Z)-tetradecenoyl-CoA + oxidized [electron-transfer flavoprotein] + H(+) = (2E,5Z)-tetradecadienoyl-CoA + reduced [electron-transfer flavoprotein]</text>
        <dbReference type="Rhea" id="RHEA:47448"/>
        <dbReference type="Rhea" id="RHEA-COMP:10685"/>
        <dbReference type="Rhea" id="RHEA-COMP:10686"/>
        <dbReference type="ChEBI" id="CHEBI:15378"/>
        <dbReference type="ChEBI" id="CHEBI:57692"/>
        <dbReference type="ChEBI" id="CHEBI:58307"/>
        <dbReference type="ChEBI" id="CHEBI:84650"/>
        <dbReference type="ChEBI" id="CHEBI:87701"/>
    </reaction>
    <physiologicalReaction direction="left-to-right" evidence="1">
        <dbReference type="Rhea" id="RHEA:47449"/>
    </physiologicalReaction>
</comment>
<comment type="catalytic activity">
    <reaction evidence="1">
        <text>oxidized [electron-transfer flavoprotein] + (9Z)-octadecenoyl-CoA + H(+) = (2E,9Z)-octadecadienoyl-CoA + reduced [electron-transfer flavoprotein]</text>
        <dbReference type="Rhea" id="RHEA:47300"/>
        <dbReference type="Rhea" id="RHEA-COMP:10685"/>
        <dbReference type="Rhea" id="RHEA-COMP:10686"/>
        <dbReference type="ChEBI" id="CHEBI:15378"/>
        <dbReference type="ChEBI" id="CHEBI:57387"/>
        <dbReference type="ChEBI" id="CHEBI:57692"/>
        <dbReference type="ChEBI" id="CHEBI:58307"/>
        <dbReference type="ChEBI" id="CHEBI:77553"/>
    </reaction>
    <physiologicalReaction direction="left-to-right" evidence="1">
        <dbReference type="Rhea" id="RHEA:47301"/>
    </physiologicalReaction>
</comment>
<comment type="cofactor">
    <cofactor evidence="1">
        <name>FAD</name>
        <dbReference type="ChEBI" id="CHEBI:57692"/>
    </cofactor>
</comment>
<comment type="biophysicochemical properties">
    <kinetics>
        <KM evidence="7">29 uM for hexanoyl-CoA</KM>
        <KM evidence="7">8 uM for octanoyl-CoA</KM>
        <KM evidence="7">10 uM for decanoyl-CoA</KM>
        <KM evidence="7">7 uM for dodecanoyl-CoA</KM>
        <KM evidence="7">10 uM for tetradecanoyl-CoA</KM>
        <KM evidence="7">14 uM for hexadecanoyl-CoA</KM>
        <KM evidence="7">8 uM for octadecanoyl-CoA</KM>
    </kinetics>
</comment>
<comment type="pathway">
    <text evidence="1">Lipid metabolism; mitochondrial fatty acid beta-oxidation.</text>
</comment>
<comment type="subunit">
    <text evidence="1">Homotetramer.</text>
</comment>
<comment type="interaction">
    <interactant intactId="EBI-12059321">
        <id>P28330</id>
    </interactant>
    <interactant intactId="EBI-8032987">
        <id>Q8N9I0</id>
        <label>SYT2</label>
    </interactant>
    <organismsDiffer>false</organismsDiffer>
    <experiments>2</experiments>
</comment>
<comment type="interaction">
    <interactant intactId="EBI-12059321">
        <id>P28330</id>
    </interactant>
    <interactant intactId="EBI-2562368">
        <id>P22735</id>
        <label>TGM1</label>
    </interactant>
    <organismsDiffer>false</organismsDiffer>
    <experiments>3</experiments>
</comment>
<comment type="subcellular location">
    <subcellularLocation>
        <location evidence="1">Mitochondrion matrix</location>
    </subcellularLocation>
</comment>
<comment type="PTM">
    <text evidence="3">Acetylation at Lys-318 and Lys-322 in proximity of the cofactor-binding sites strongly reduces catalytic activity. These sites are deacetylated by SIRT3.</text>
</comment>
<comment type="similarity">
    <text evidence="9">Belongs to the acyl-CoA dehydrogenase family.</text>
</comment>
<proteinExistence type="evidence at protein level"/>